<comment type="function">
    <text evidence="1">Key component of the proton channel; it plays a direct role in the translocation of protons across the membrane.</text>
</comment>
<comment type="subunit">
    <text evidence="1">F-type ATPases have 2 components, CF(1) - the catalytic core - and CF(0) - the membrane proton channel. CF(1) has five subunits: alpha(3), beta(3), gamma(1), delta(1), epsilon(1). CF(0) has three main subunits: a(1), b(2) and c(9-12). The alpha and beta chains form an alternating ring which encloses part of the gamma chain. CF(1) is attached to CF(0) by a central stalk formed by the gamma and epsilon chains, while a peripheral stalk is formed by the delta and b chains.</text>
</comment>
<comment type="subcellular location">
    <subcellularLocation>
        <location evidence="1">Cell inner membrane</location>
        <topology evidence="1">Multi-pass membrane protein</topology>
    </subcellularLocation>
</comment>
<comment type="similarity">
    <text evidence="1">Belongs to the ATPase A chain family.</text>
</comment>
<feature type="chain" id="PRO_0000362465" description="ATP synthase subunit a">
    <location>
        <begin position="1"/>
        <end position="271"/>
    </location>
</feature>
<feature type="transmembrane region" description="Helical" evidence="1">
    <location>
        <begin position="40"/>
        <end position="60"/>
    </location>
</feature>
<feature type="transmembrane region" description="Helical" evidence="1">
    <location>
        <begin position="100"/>
        <end position="120"/>
    </location>
</feature>
<feature type="transmembrane region" description="Helical" evidence="1">
    <location>
        <begin position="146"/>
        <end position="166"/>
    </location>
</feature>
<feature type="transmembrane region" description="Helical" evidence="1">
    <location>
        <begin position="220"/>
        <end position="240"/>
    </location>
</feature>
<feature type="transmembrane region" description="Helical" evidence="1">
    <location>
        <begin position="242"/>
        <end position="262"/>
    </location>
</feature>
<organism>
    <name type="scientific">Shigella dysenteriae serotype 1 (strain Sd197)</name>
    <dbReference type="NCBI Taxonomy" id="300267"/>
    <lineage>
        <taxon>Bacteria</taxon>
        <taxon>Pseudomonadati</taxon>
        <taxon>Pseudomonadota</taxon>
        <taxon>Gammaproteobacteria</taxon>
        <taxon>Enterobacterales</taxon>
        <taxon>Enterobacteriaceae</taxon>
        <taxon>Shigella</taxon>
    </lineage>
</organism>
<reference key="1">
    <citation type="journal article" date="2005" name="Nucleic Acids Res.">
        <title>Genome dynamics and diversity of Shigella species, the etiologic agents of bacillary dysentery.</title>
        <authorList>
            <person name="Yang F."/>
            <person name="Yang J."/>
            <person name="Zhang X."/>
            <person name="Chen L."/>
            <person name="Jiang Y."/>
            <person name="Yan Y."/>
            <person name="Tang X."/>
            <person name="Wang J."/>
            <person name="Xiong Z."/>
            <person name="Dong J."/>
            <person name="Xue Y."/>
            <person name="Zhu Y."/>
            <person name="Xu X."/>
            <person name="Sun L."/>
            <person name="Chen S."/>
            <person name="Nie H."/>
            <person name="Peng J."/>
            <person name="Xu J."/>
            <person name="Wang Y."/>
            <person name="Yuan Z."/>
            <person name="Wen Y."/>
            <person name="Yao Z."/>
            <person name="Shen Y."/>
            <person name="Qiang B."/>
            <person name="Hou Y."/>
            <person name="Yu J."/>
            <person name="Jin Q."/>
        </authorList>
    </citation>
    <scope>NUCLEOTIDE SEQUENCE [LARGE SCALE GENOMIC DNA]</scope>
    <source>
        <strain>Sd197</strain>
    </source>
</reference>
<proteinExistence type="inferred from homology"/>
<accession>Q329S7</accession>
<name>ATP6_SHIDS</name>
<keyword id="KW-0066">ATP synthesis</keyword>
<keyword id="KW-0997">Cell inner membrane</keyword>
<keyword id="KW-1003">Cell membrane</keyword>
<keyword id="KW-0138">CF(0)</keyword>
<keyword id="KW-0375">Hydrogen ion transport</keyword>
<keyword id="KW-0406">Ion transport</keyword>
<keyword id="KW-0472">Membrane</keyword>
<keyword id="KW-1185">Reference proteome</keyword>
<keyword id="KW-0812">Transmembrane</keyword>
<keyword id="KW-1133">Transmembrane helix</keyword>
<keyword id="KW-0813">Transport</keyword>
<evidence type="ECO:0000255" key="1">
    <source>
        <dbReference type="HAMAP-Rule" id="MF_01393"/>
    </source>
</evidence>
<gene>
    <name evidence="1" type="primary">atpB</name>
    <name type="ordered locus">SDY_4010</name>
</gene>
<protein>
    <recommendedName>
        <fullName evidence="1">ATP synthase subunit a</fullName>
    </recommendedName>
    <alternativeName>
        <fullName evidence="1">ATP synthase F0 sector subunit a</fullName>
    </alternativeName>
    <alternativeName>
        <fullName evidence="1">F-ATPase subunit 6</fullName>
    </alternativeName>
</protein>
<dbReference type="EMBL" id="CP000034">
    <property type="protein sequence ID" value="ABB63928.1"/>
    <property type="molecule type" value="Genomic_DNA"/>
</dbReference>
<dbReference type="RefSeq" id="WP_000135621.1">
    <property type="nucleotide sequence ID" value="NC_007606.1"/>
</dbReference>
<dbReference type="RefSeq" id="YP_405419.1">
    <property type="nucleotide sequence ID" value="NC_007606.1"/>
</dbReference>
<dbReference type="SMR" id="Q329S7"/>
<dbReference type="STRING" id="300267.SDY_4010"/>
<dbReference type="EnsemblBacteria" id="ABB63928">
    <property type="protein sequence ID" value="ABB63928"/>
    <property type="gene ID" value="SDY_4010"/>
</dbReference>
<dbReference type="KEGG" id="sdy:SDY_4010"/>
<dbReference type="PATRIC" id="fig|300267.13.peg.4723"/>
<dbReference type="HOGENOM" id="CLU_041018_1_0_6"/>
<dbReference type="Proteomes" id="UP000002716">
    <property type="component" value="Chromosome"/>
</dbReference>
<dbReference type="GO" id="GO:0005886">
    <property type="term" value="C:plasma membrane"/>
    <property type="evidence" value="ECO:0007669"/>
    <property type="project" value="UniProtKB-SubCell"/>
</dbReference>
<dbReference type="GO" id="GO:0045259">
    <property type="term" value="C:proton-transporting ATP synthase complex"/>
    <property type="evidence" value="ECO:0007669"/>
    <property type="project" value="UniProtKB-KW"/>
</dbReference>
<dbReference type="GO" id="GO:0046933">
    <property type="term" value="F:proton-transporting ATP synthase activity, rotational mechanism"/>
    <property type="evidence" value="ECO:0007669"/>
    <property type="project" value="UniProtKB-UniRule"/>
</dbReference>
<dbReference type="GO" id="GO:0042777">
    <property type="term" value="P:proton motive force-driven plasma membrane ATP synthesis"/>
    <property type="evidence" value="ECO:0007669"/>
    <property type="project" value="TreeGrafter"/>
</dbReference>
<dbReference type="CDD" id="cd00310">
    <property type="entry name" value="ATP-synt_Fo_a_6"/>
    <property type="match status" value="1"/>
</dbReference>
<dbReference type="FunFam" id="1.20.120.220:FF:000002">
    <property type="entry name" value="ATP synthase subunit a"/>
    <property type="match status" value="1"/>
</dbReference>
<dbReference type="Gene3D" id="1.20.120.220">
    <property type="entry name" value="ATP synthase, F0 complex, subunit A"/>
    <property type="match status" value="1"/>
</dbReference>
<dbReference type="HAMAP" id="MF_01393">
    <property type="entry name" value="ATP_synth_a_bact"/>
    <property type="match status" value="1"/>
</dbReference>
<dbReference type="InterPro" id="IPR045082">
    <property type="entry name" value="ATP_syn_F0_a_bact/chloroplast"/>
</dbReference>
<dbReference type="InterPro" id="IPR000568">
    <property type="entry name" value="ATP_synth_F0_asu"/>
</dbReference>
<dbReference type="InterPro" id="IPR023011">
    <property type="entry name" value="ATP_synth_F0_asu_AS"/>
</dbReference>
<dbReference type="InterPro" id="IPR035908">
    <property type="entry name" value="F0_ATP_A_sf"/>
</dbReference>
<dbReference type="NCBIfam" id="TIGR01131">
    <property type="entry name" value="ATP_synt_6_or_A"/>
    <property type="match status" value="1"/>
</dbReference>
<dbReference type="NCBIfam" id="NF004477">
    <property type="entry name" value="PRK05815.1-1"/>
    <property type="match status" value="1"/>
</dbReference>
<dbReference type="PANTHER" id="PTHR42823">
    <property type="entry name" value="ATP SYNTHASE SUBUNIT A, CHLOROPLASTIC"/>
    <property type="match status" value="1"/>
</dbReference>
<dbReference type="PANTHER" id="PTHR42823:SF3">
    <property type="entry name" value="ATP SYNTHASE SUBUNIT A, CHLOROPLASTIC"/>
    <property type="match status" value="1"/>
</dbReference>
<dbReference type="Pfam" id="PF00119">
    <property type="entry name" value="ATP-synt_A"/>
    <property type="match status" value="1"/>
</dbReference>
<dbReference type="PRINTS" id="PR00123">
    <property type="entry name" value="ATPASEA"/>
</dbReference>
<dbReference type="SUPFAM" id="SSF81336">
    <property type="entry name" value="F1F0 ATP synthase subunit A"/>
    <property type="match status" value="1"/>
</dbReference>
<dbReference type="PROSITE" id="PS00449">
    <property type="entry name" value="ATPASE_A"/>
    <property type="match status" value="1"/>
</dbReference>
<sequence length="271" mass="30261">MASENMTPQDYIGHHLNNLQLDLRTFSLVDPQNPPATFWTINIDSMFFSVGLGLLFLVLFRSVAKKATSGVPGKFQTAIELVIGFVNGSVKDMYHGKSKLIAPLALTIFVWVFLMNLMDLLPIDLLPYIAEHVLGLPALRVVPSADVNVTLSMALGVFILILFYSIKMKGIGGFTKELTLQPFNHWAFIPVNLILEGVSLLSKPVSLGLRLFGNMYAGELIFILIAGLLPWWSQWILNVPWAIFHILIITLQAFIFMVLTIVYLSMASEEH</sequence>